<keyword id="KW-0963">Cytoplasm</keyword>
<keyword id="KW-0235">DNA replication</keyword>
<keyword id="KW-0238">DNA-binding</keyword>
<keyword id="KW-0239">DNA-directed DNA polymerase</keyword>
<keyword id="KW-0548">Nucleotidyltransferase</keyword>
<keyword id="KW-1185">Reference proteome</keyword>
<keyword id="KW-0808">Transferase</keyword>
<evidence type="ECO:0000250" key="1">
    <source>
        <dbReference type="UniProtKB" id="P0A988"/>
    </source>
</evidence>
<evidence type="ECO:0000305" key="2"/>
<name>DPO3B_BUCAI</name>
<proteinExistence type="inferred from homology"/>
<accession>P57127</accession>
<accession>Q9EVE5</accession>
<protein>
    <recommendedName>
        <fullName>Beta sliding clamp</fullName>
        <shortName>Beta clamp</shortName>
        <shortName>Sliding clamp</shortName>
    </recommendedName>
    <alternativeName>
        <fullName>Beta-clamp processivity factor</fullName>
    </alternativeName>
    <alternativeName>
        <fullName>DNA polymerase III beta sliding clamp subunit</fullName>
    </alternativeName>
    <alternativeName>
        <fullName>DNA polymerase III subunit beta</fullName>
    </alternativeName>
</protein>
<sequence length="366" mass="41985">MKFIINNNILIKNLQKISRLLVKNTSLPILDNVLINIKNGMLSLTGTNLEIELVAMIQLSTEHISGTATISGRKLLDICRNSLNSSNIEMQLNNNKMHIISGNSRYILTTLPYDSFPVHHDFHHISEFFIPSDILKKMIEKIQFSMAKQDVRYYLNGILLEKTDRSLYAVATDGYRLGISKFFLKENIIPFSIVIPRKGVIELYRLLNIPKQPIKVLVGKNNIRVHIEDLIFTTQLIEGQYPDYKSVLLENKNNFITLNSKLLKQSLLRAAILSHEKFCGVEIHIRNGQFKVLSDNQEEEIAEDRFNINYTGNTVKISINVYYIIEILNSITSENIFLFLNNANNSIQIEAENDASILYVVMLLKR</sequence>
<dbReference type="EMBL" id="AF197895">
    <property type="protein sequence ID" value="AAG33955.1"/>
    <property type="molecule type" value="Genomic_DNA"/>
</dbReference>
<dbReference type="EMBL" id="BA000003">
    <property type="protein sequence ID" value="BAB12739.1"/>
    <property type="molecule type" value="Genomic_DNA"/>
</dbReference>
<dbReference type="RefSeq" id="NP_239853.1">
    <property type="nucleotide sequence ID" value="NC_002528.1"/>
</dbReference>
<dbReference type="RefSeq" id="WP_010895902.1">
    <property type="nucleotide sequence ID" value="NC_002528.1"/>
</dbReference>
<dbReference type="SMR" id="P57127"/>
<dbReference type="STRING" id="563178.BUAP5A_011"/>
<dbReference type="EnsemblBacteria" id="BAB12739">
    <property type="protein sequence ID" value="BAB12739"/>
    <property type="gene ID" value="BAB12739"/>
</dbReference>
<dbReference type="KEGG" id="buc:BU011"/>
<dbReference type="PATRIC" id="fig|107806.10.peg.24"/>
<dbReference type="eggNOG" id="COG0592">
    <property type="taxonomic scope" value="Bacteria"/>
</dbReference>
<dbReference type="HOGENOM" id="CLU_038149_4_2_6"/>
<dbReference type="Proteomes" id="UP000001806">
    <property type="component" value="Chromosome"/>
</dbReference>
<dbReference type="GO" id="GO:0005737">
    <property type="term" value="C:cytoplasm"/>
    <property type="evidence" value="ECO:0007669"/>
    <property type="project" value="UniProtKB-SubCell"/>
</dbReference>
<dbReference type="GO" id="GO:0009360">
    <property type="term" value="C:DNA polymerase III complex"/>
    <property type="evidence" value="ECO:0007669"/>
    <property type="project" value="InterPro"/>
</dbReference>
<dbReference type="GO" id="GO:0008408">
    <property type="term" value="F:3'-5' exonuclease activity"/>
    <property type="evidence" value="ECO:0007669"/>
    <property type="project" value="InterPro"/>
</dbReference>
<dbReference type="GO" id="GO:0003677">
    <property type="term" value="F:DNA binding"/>
    <property type="evidence" value="ECO:0007669"/>
    <property type="project" value="UniProtKB-KW"/>
</dbReference>
<dbReference type="GO" id="GO:0003887">
    <property type="term" value="F:DNA-directed DNA polymerase activity"/>
    <property type="evidence" value="ECO:0007669"/>
    <property type="project" value="UniProtKB-KW"/>
</dbReference>
<dbReference type="GO" id="GO:0006271">
    <property type="term" value="P:DNA strand elongation involved in DNA replication"/>
    <property type="evidence" value="ECO:0007669"/>
    <property type="project" value="TreeGrafter"/>
</dbReference>
<dbReference type="CDD" id="cd00140">
    <property type="entry name" value="beta_clamp"/>
    <property type="match status" value="1"/>
</dbReference>
<dbReference type="Gene3D" id="3.70.10.10">
    <property type="match status" value="1"/>
</dbReference>
<dbReference type="Gene3D" id="3.10.150.10">
    <property type="entry name" value="DNA Polymerase III, subunit A, domain 2"/>
    <property type="match status" value="1"/>
</dbReference>
<dbReference type="InterPro" id="IPR046938">
    <property type="entry name" value="DNA_clamp_sf"/>
</dbReference>
<dbReference type="InterPro" id="IPR001001">
    <property type="entry name" value="DNA_polIII_beta"/>
</dbReference>
<dbReference type="InterPro" id="IPR022635">
    <property type="entry name" value="DNA_polIII_beta_C"/>
</dbReference>
<dbReference type="InterPro" id="IPR022637">
    <property type="entry name" value="DNA_polIII_beta_cen"/>
</dbReference>
<dbReference type="InterPro" id="IPR022634">
    <property type="entry name" value="DNA_polIII_beta_N"/>
</dbReference>
<dbReference type="NCBIfam" id="TIGR00663">
    <property type="entry name" value="dnan"/>
    <property type="match status" value="1"/>
</dbReference>
<dbReference type="PANTHER" id="PTHR30478:SF0">
    <property type="entry name" value="BETA SLIDING CLAMP"/>
    <property type="match status" value="1"/>
</dbReference>
<dbReference type="PANTHER" id="PTHR30478">
    <property type="entry name" value="DNA POLYMERASE III SUBUNIT BETA"/>
    <property type="match status" value="1"/>
</dbReference>
<dbReference type="Pfam" id="PF00712">
    <property type="entry name" value="DNA_pol3_beta"/>
    <property type="match status" value="1"/>
</dbReference>
<dbReference type="Pfam" id="PF02767">
    <property type="entry name" value="DNA_pol3_beta_2"/>
    <property type="match status" value="1"/>
</dbReference>
<dbReference type="Pfam" id="PF02768">
    <property type="entry name" value="DNA_pol3_beta_3"/>
    <property type="match status" value="1"/>
</dbReference>
<dbReference type="PIRSF" id="PIRSF000804">
    <property type="entry name" value="DNA_pol_III_b"/>
    <property type="match status" value="1"/>
</dbReference>
<dbReference type="SMART" id="SM00480">
    <property type="entry name" value="POL3Bc"/>
    <property type="match status" value="1"/>
</dbReference>
<dbReference type="SUPFAM" id="SSF55979">
    <property type="entry name" value="DNA clamp"/>
    <property type="match status" value="3"/>
</dbReference>
<organism>
    <name type="scientific">Buchnera aphidicola subsp. Acyrthosiphon pisum (strain APS)</name>
    <name type="common">Acyrthosiphon pisum symbiotic bacterium</name>
    <dbReference type="NCBI Taxonomy" id="107806"/>
    <lineage>
        <taxon>Bacteria</taxon>
        <taxon>Pseudomonadati</taxon>
        <taxon>Pseudomonadota</taxon>
        <taxon>Gammaproteobacteria</taxon>
        <taxon>Enterobacterales</taxon>
        <taxon>Erwiniaceae</taxon>
        <taxon>Buchnera</taxon>
    </lineage>
</organism>
<feature type="chain" id="PRO_0000105426" description="Beta sliding clamp">
    <location>
        <begin position="1"/>
        <end position="366"/>
    </location>
</feature>
<feature type="sequence conflict" description="In Ref. 1; AAG33955." evidence="2" ref="1">
    <original>A</original>
    <variation>G</variation>
    <location>
        <position position="147"/>
    </location>
</feature>
<feature type="sequence conflict" description="In Ref. 1; AAG33955." evidence="2" ref="1">
    <original>RY</original>
    <variation>PI</variation>
    <location>
        <begin position="152"/>
        <end position="153"/>
    </location>
</feature>
<reference key="1">
    <citation type="journal article" date="2001" name="J. Bacteriol.">
        <title>Vertical transmission of biosynthetic plasmids in aphid endosymbionts (Buchnera).</title>
        <authorList>
            <person name="Wernegreen J.J."/>
            <person name="Moran N.A."/>
        </authorList>
    </citation>
    <scope>NUCLEOTIDE SEQUENCE [GENOMIC DNA]</scope>
</reference>
<reference key="2">
    <citation type="journal article" date="2000" name="Nature">
        <title>Genome sequence of the endocellular bacterial symbiont of aphids Buchnera sp. APS.</title>
        <authorList>
            <person name="Shigenobu S."/>
            <person name="Watanabe H."/>
            <person name="Hattori M."/>
            <person name="Sakaki Y."/>
            <person name="Ishikawa H."/>
        </authorList>
    </citation>
    <scope>NUCLEOTIDE SEQUENCE [LARGE SCALE GENOMIC DNA]</scope>
    <source>
        <strain>APS</strain>
    </source>
</reference>
<comment type="function">
    <text evidence="1">Confers DNA tethering and processivity to DNA polymerases and other proteins. Acts as a clamp, forming a ring around DNA (a reaction catalyzed by the clamp-loading complex) which diffuses in an ATP-independent manner freely and bidirectionally along dsDNA. Initially characterized for its ability to contact the catalytic subunit of DNA polymerase III (Pol III), a complex, multichain enzyme responsible for most of the replicative synthesis in bacteria; Pol III exhibits 3'-5' exonuclease proofreading activity. The beta chain is required for initiation of replication as well as for processivity of DNA replication.</text>
</comment>
<comment type="subunit">
    <text evidence="1">Forms a ring-shaped head-to-tail homodimer around DNA which binds and tethers DNA polymerases and other proteins to the DNA. The DNA replisome complex has a single clamp-loading complex (3 tau and 1 each of delta, delta', psi and chi subunits) which binds 3 Pol III cores (1 core on the leading strand and 2 on the lagging strand) each with a beta sliding clamp dimer. Additional proteins in the replisome are other copies of gamma, psi and chi, Ssb, DNA helicase and RNA primase.</text>
</comment>
<comment type="subcellular location">
    <subcellularLocation>
        <location evidence="1">Cytoplasm</location>
    </subcellularLocation>
</comment>
<comment type="similarity">
    <text evidence="2">Belongs to the beta sliding clamp family.</text>
</comment>
<gene>
    <name type="primary">dnaN</name>
    <name type="ordered locus">BU011</name>
</gene>